<accession>A0JN54</accession>
<protein>
    <recommendedName>
        <fullName>Diacylglycerol kinase alpha</fullName>
        <shortName>DAG kinase alpha</shortName>
        <ecNumber evidence="2">2.7.1.107</ecNumber>
        <ecNumber evidence="3">2.7.1.93</ecNumber>
    </recommendedName>
    <alternativeName>
        <fullName>Diglyceride kinase alpha</fullName>
        <shortName>DGK-alpha</shortName>
    </alternativeName>
</protein>
<proteinExistence type="evidence at transcript level"/>
<dbReference type="EC" id="2.7.1.107" evidence="2"/>
<dbReference type="EC" id="2.7.1.93" evidence="3"/>
<dbReference type="EMBL" id="BC126521">
    <property type="protein sequence ID" value="AAI26522.1"/>
    <property type="molecule type" value="mRNA"/>
</dbReference>
<dbReference type="RefSeq" id="NP_001071328.1">
    <property type="nucleotide sequence ID" value="NM_001077860.1"/>
</dbReference>
<dbReference type="RefSeq" id="XP_005206587.2">
    <property type="nucleotide sequence ID" value="XM_005206530.3"/>
</dbReference>
<dbReference type="RefSeq" id="XP_024847251.1">
    <property type="nucleotide sequence ID" value="XM_024991483.2"/>
</dbReference>
<dbReference type="RefSeq" id="XP_024847252.1">
    <property type="nucleotide sequence ID" value="XM_024991484.2"/>
</dbReference>
<dbReference type="SMR" id="A0JN54"/>
<dbReference type="FunCoup" id="A0JN54">
    <property type="interactions" value="578"/>
</dbReference>
<dbReference type="STRING" id="9913.ENSBTAP00000061573"/>
<dbReference type="PaxDb" id="9913-ENSBTAP00000038002"/>
<dbReference type="Ensembl" id="ENSBTAT00000038186.4">
    <property type="protein sequence ID" value="ENSBTAP00000038002.3"/>
    <property type="gene ID" value="ENSBTAG00000004018.6"/>
</dbReference>
<dbReference type="GeneID" id="506348"/>
<dbReference type="KEGG" id="bta:506348"/>
<dbReference type="CTD" id="1606"/>
<dbReference type="VEuPathDB" id="HostDB:ENSBTAG00000004018"/>
<dbReference type="VGNC" id="VGNC:28024">
    <property type="gene designation" value="DGKA"/>
</dbReference>
<dbReference type="eggNOG" id="KOG1169">
    <property type="taxonomic scope" value="Eukaryota"/>
</dbReference>
<dbReference type="GeneTree" id="ENSGT00940000157144"/>
<dbReference type="HOGENOM" id="CLU_003770_1_1_1"/>
<dbReference type="InParanoid" id="A0JN54"/>
<dbReference type="OMA" id="KAMPCEV"/>
<dbReference type="OrthoDB" id="242257at2759"/>
<dbReference type="TreeFam" id="TF313104"/>
<dbReference type="Reactome" id="R-BTA-114508">
    <property type="pathway name" value="Effects of PIP2 hydrolysis"/>
</dbReference>
<dbReference type="UniPathway" id="UPA00230"/>
<dbReference type="Proteomes" id="UP000009136">
    <property type="component" value="Chromosome 5"/>
</dbReference>
<dbReference type="Bgee" id="ENSBTAG00000004018">
    <property type="expression patterns" value="Expressed in mesenteric lymph node and 106 other cell types or tissues"/>
</dbReference>
<dbReference type="GO" id="GO:0005829">
    <property type="term" value="C:cytosol"/>
    <property type="evidence" value="ECO:0000250"/>
    <property type="project" value="UniProtKB"/>
</dbReference>
<dbReference type="GO" id="GO:0005886">
    <property type="term" value="C:plasma membrane"/>
    <property type="evidence" value="ECO:0000318"/>
    <property type="project" value="GO_Central"/>
</dbReference>
<dbReference type="GO" id="GO:0047649">
    <property type="term" value="F:alkylglycerol kinase activity"/>
    <property type="evidence" value="ECO:0007669"/>
    <property type="project" value="RHEA"/>
</dbReference>
<dbReference type="GO" id="GO:0005524">
    <property type="term" value="F:ATP binding"/>
    <property type="evidence" value="ECO:0007669"/>
    <property type="project" value="UniProtKB-KW"/>
</dbReference>
<dbReference type="GO" id="GO:0004143">
    <property type="term" value="F:ATP-dependent diacylglycerol kinase activity"/>
    <property type="evidence" value="ECO:0000250"/>
    <property type="project" value="UniProtKB"/>
</dbReference>
<dbReference type="GO" id="GO:0005509">
    <property type="term" value="F:calcium ion binding"/>
    <property type="evidence" value="ECO:0007669"/>
    <property type="project" value="InterPro"/>
</dbReference>
<dbReference type="GO" id="GO:0008270">
    <property type="term" value="F:zinc ion binding"/>
    <property type="evidence" value="ECO:0007669"/>
    <property type="project" value="UniProtKB-KW"/>
</dbReference>
<dbReference type="GO" id="GO:0046339">
    <property type="term" value="P:diacylglycerol metabolic process"/>
    <property type="evidence" value="ECO:0000250"/>
    <property type="project" value="UniProtKB"/>
</dbReference>
<dbReference type="GO" id="GO:0035556">
    <property type="term" value="P:intracellular signal transduction"/>
    <property type="evidence" value="ECO:0000318"/>
    <property type="project" value="GO_Central"/>
</dbReference>
<dbReference type="GO" id="GO:0046834">
    <property type="term" value="P:lipid phosphorylation"/>
    <property type="evidence" value="ECO:0000250"/>
    <property type="project" value="UniProtKB"/>
</dbReference>
<dbReference type="GO" id="GO:0006654">
    <property type="term" value="P:phosphatidic acid biosynthetic process"/>
    <property type="evidence" value="ECO:0000250"/>
    <property type="project" value="UniProtKB"/>
</dbReference>
<dbReference type="GO" id="GO:0007200">
    <property type="term" value="P:phospholipase C-activating G protein-coupled receptor signaling pathway"/>
    <property type="evidence" value="ECO:0007669"/>
    <property type="project" value="InterPro"/>
</dbReference>
<dbReference type="CDD" id="cd20890">
    <property type="entry name" value="C1_DGKalpha_rpt2"/>
    <property type="match status" value="1"/>
</dbReference>
<dbReference type="CDD" id="cd00051">
    <property type="entry name" value="EFh"/>
    <property type="match status" value="1"/>
</dbReference>
<dbReference type="FunFam" id="1.10.238.10:FF:000017">
    <property type="entry name" value="Diacylglycerol kinase"/>
    <property type="match status" value="1"/>
</dbReference>
<dbReference type="FunFam" id="1.10.238.110:FF:000004">
    <property type="entry name" value="Diacylglycerol kinase"/>
    <property type="match status" value="1"/>
</dbReference>
<dbReference type="FunFam" id="2.60.200.40:FF:000003">
    <property type="entry name" value="Diacylglycerol kinase"/>
    <property type="match status" value="1"/>
</dbReference>
<dbReference type="FunFam" id="3.30.60.20:FF:000039">
    <property type="entry name" value="Diacylglycerol kinase"/>
    <property type="match status" value="1"/>
</dbReference>
<dbReference type="FunFam" id="3.30.60.20:FF:000047">
    <property type="entry name" value="Diacylglycerol kinase"/>
    <property type="match status" value="1"/>
</dbReference>
<dbReference type="FunFam" id="3.40.50.10330:FF:000003">
    <property type="entry name" value="Diacylglycerol kinase"/>
    <property type="match status" value="1"/>
</dbReference>
<dbReference type="Gene3D" id="2.60.200.40">
    <property type="match status" value="1"/>
</dbReference>
<dbReference type="Gene3D" id="3.30.60.20">
    <property type="match status" value="2"/>
</dbReference>
<dbReference type="Gene3D" id="1.10.238.110">
    <property type="entry name" value="Diacylglycerol kinase alpha"/>
    <property type="match status" value="1"/>
</dbReference>
<dbReference type="Gene3D" id="1.10.238.10">
    <property type="entry name" value="EF-hand"/>
    <property type="match status" value="1"/>
</dbReference>
<dbReference type="Gene3D" id="3.40.50.10330">
    <property type="entry name" value="Probable inorganic polyphosphate/atp-NAD kinase, domain 1"/>
    <property type="match status" value="1"/>
</dbReference>
<dbReference type="InterPro" id="IPR017438">
    <property type="entry name" value="ATP-NAD_kinase_N"/>
</dbReference>
<dbReference type="InterPro" id="IPR046349">
    <property type="entry name" value="C1-like_sf"/>
</dbReference>
<dbReference type="InterPro" id="IPR047469">
    <property type="entry name" value="C1_DGKalpha_rpt2"/>
</dbReference>
<dbReference type="InterPro" id="IPR029477">
    <property type="entry name" value="DAG_kinase_typeI_N"/>
</dbReference>
<dbReference type="InterPro" id="IPR037607">
    <property type="entry name" value="DGK"/>
</dbReference>
<dbReference type="InterPro" id="IPR038199">
    <property type="entry name" value="DGK_typeI_N_sf"/>
</dbReference>
<dbReference type="InterPro" id="IPR000756">
    <property type="entry name" value="Diacylglycerol_kin_accessory"/>
</dbReference>
<dbReference type="InterPro" id="IPR001206">
    <property type="entry name" value="Diacylglycerol_kinase_cat_dom"/>
</dbReference>
<dbReference type="InterPro" id="IPR011992">
    <property type="entry name" value="EF-hand-dom_pair"/>
</dbReference>
<dbReference type="InterPro" id="IPR018247">
    <property type="entry name" value="EF_Hand_1_Ca_BS"/>
</dbReference>
<dbReference type="InterPro" id="IPR002048">
    <property type="entry name" value="EF_hand_dom"/>
</dbReference>
<dbReference type="InterPro" id="IPR016064">
    <property type="entry name" value="NAD/diacylglycerol_kinase_sf"/>
</dbReference>
<dbReference type="InterPro" id="IPR002219">
    <property type="entry name" value="PE/DAG-bd"/>
</dbReference>
<dbReference type="PANTHER" id="PTHR11255">
    <property type="entry name" value="DIACYLGLYCEROL KINASE"/>
    <property type="match status" value="1"/>
</dbReference>
<dbReference type="PANTHER" id="PTHR11255:SF38">
    <property type="entry name" value="DIACYLGLYCEROL KINASE ALPHA"/>
    <property type="match status" value="1"/>
</dbReference>
<dbReference type="Pfam" id="PF00130">
    <property type="entry name" value="C1_1"/>
    <property type="match status" value="2"/>
</dbReference>
<dbReference type="Pfam" id="PF14513">
    <property type="entry name" value="DAG_kinase_N"/>
    <property type="match status" value="1"/>
</dbReference>
<dbReference type="Pfam" id="PF00609">
    <property type="entry name" value="DAGK_acc"/>
    <property type="match status" value="1"/>
</dbReference>
<dbReference type="Pfam" id="PF00781">
    <property type="entry name" value="DAGK_cat"/>
    <property type="match status" value="1"/>
</dbReference>
<dbReference type="Pfam" id="PF13499">
    <property type="entry name" value="EF-hand_7"/>
    <property type="match status" value="1"/>
</dbReference>
<dbReference type="SMART" id="SM00109">
    <property type="entry name" value="C1"/>
    <property type="match status" value="2"/>
</dbReference>
<dbReference type="SMART" id="SM00045">
    <property type="entry name" value="DAGKa"/>
    <property type="match status" value="1"/>
</dbReference>
<dbReference type="SMART" id="SM00046">
    <property type="entry name" value="DAGKc"/>
    <property type="match status" value="1"/>
</dbReference>
<dbReference type="SMART" id="SM00054">
    <property type="entry name" value="EFh"/>
    <property type="match status" value="2"/>
</dbReference>
<dbReference type="SUPFAM" id="SSF57889">
    <property type="entry name" value="Cysteine-rich domain"/>
    <property type="match status" value="2"/>
</dbReference>
<dbReference type="SUPFAM" id="SSF47473">
    <property type="entry name" value="EF-hand"/>
    <property type="match status" value="2"/>
</dbReference>
<dbReference type="SUPFAM" id="SSF111331">
    <property type="entry name" value="NAD kinase/diacylglycerol kinase-like"/>
    <property type="match status" value="1"/>
</dbReference>
<dbReference type="PROSITE" id="PS50146">
    <property type="entry name" value="DAGK"/>
    <property type="match status" value="1"/>
</dbReference>
<dbReference type="PROSITE" id="PS00018">
    <property type="entry name" value="EF_HAND_1"/>
    <property type="match status" value="2"/>
</dbReference>
<dbReference type="PROSITE" id="PS50222">
    <property type="entry name" value="EF_HAND_2"/>
    <property type="match status" value="2"/>
</dbReference>
<dbReference type="PROSITE" id="PS00479">
    <property type="entry name" value="ZF_DAG_PE_1"/>
    <property type="match status" value="2"/>
</dbReference>
<dbReference type="PROSITE" id="PS50081">
    <property type="entry name" value="ZF_DAG_PE_2"/>
    <property type="match status" value="2"/>
</dbReference>
<keyword id="KW-0007">Acetylation</keyword>
<keyword id="KW-0067">ATP-binding</keyword>
<keyword id="KW-0106">Calcium</keyword>
<keyword id="KW-0963">Cytoplasm</keyword>
<keyword id="KW-0418">Kinase</keyword>
<keyword id="KW-0443">Lipid metabolism</keyword>
<keyword id="KW-0479">Metal-binding</keyword>
<keyword id="KW-0547">Nucleotide-binding</keyword>
<keyword id="KW-1185">Reference proteome</keyword>
<keyword id="KW-0677">Repeat</keyword>
<keyword id="KW-0808">Transferase</keyword>
<keyword id="KW-0862">Zinc</keyword>
<keyword id="KW-0863">Zinc-finger</keyword>
<gene>
    <name type="primary">DGKA</name>
</gene>
<organism>
    <name type="scientific">Bos taurus</name>
    <name type="common">Bovine</name>
    <dbReference type="NCBI Taxonomy" id="9913"/>
    <lineage>
        <taxon>Eukaryota</taxon>
        <taxon>Metazoa</taxon>
        <taxon>Chordata</taxon>
        <taxon>Craniata</taxon>
        <taxon>Vertebrata</taxon>
        <taxon>Euteleostomi</taxon>
        <taxon>Mammalia</taxon>
        <taxon>Eutheria</taxon>
        <taxon>Laurasiatheria</taxon>
        <taxon>Artiodactyla</taxon>
        <taxon>Ruminantia</taxon>
        <taxon>Pecora</taxon>
        <taxon>Bovidae</taxon>
        <taxon>Bovinae</taxon>
        <taxon>Bos</taxon>
    </lineage>
</organism>
<reference key="1">
    <citation type="submission" date="2006-10" db="EMBL/GenBank/DDBJ databases">
        <authorList>
            <consortium name="NIH - Mammalian Gene Collection (MGC) project"/>
        </authorList>
    </citation>
    <scope>NUCLEOTIDE SEQUENCE [LARGE SCALE MRNA]</scope>
    <source>
        <strain>Hereford</strain>
        <tissue>Fetal skin</tissue>
    </source>
</reference>
<feature type="chain" id="PRO_0000281914" description="Diacylglycerol kinase alpha">
    <location>
        <begin position="1"/>
        <end position="734"/>
    </location>
</feature>
<feature type="domain" description="EF-hand 1" evidence="5">
    <location>
        <begin position="109"/>
        <end position="144"/>
    </location>
</feature>
<feature type="domain" description="EF-hand 2" evidence="5">
    <location>
        <begin position="154"/>
        <end position="189"/>
    </location>
</feature>
<feature type="domain" description="DAGKc" evidence="6">
    <location>
        <begin position="371"/>
        <end position="505"/>
    </location>
</feature>
<feature type="zinc finger region" description="Phorbol-ester/DAG-type 1" evidence="4">
    <location>
        <begin position="204"/>
        <end position="252"/>
    </location>
</feature>
<feature type="zinc finger region" description="Phorbol-ester/DAG-type 2" evidence="4">
    <location>
        <begin position="268"/>
        <end position="318"/>
    </location>
</feature>
<feature type="binding site" evidence="5">
    <location>
        <position position="122"/>
    </location>
    <ligand>
        <name>Ca(2+)</name>
        <dbReference type="ChEBI" id="CHEBI:29108"/>
        <label>1</label>
    </ligand>
</feature>
<feature type="binding site" evidence="5">
    <location>
        <position position="124"/>
    </location>
    <ligand>
        <name>Ca(2+)</name>
        <dbReference type="ChEBI" id="CHEBI:29108"/>
        <label>1</label>
    </ligand>
</feature>
<feature type="binding site" evidence="5">
    <location>
        <position position="126"/>
    </location>
    <ligand>
        <name>Ca(2+)</name>
        <dbReference type="ChEBI" id="CHEBI:29108"/>
        <label>1</label>
    </ligand>
</feature>
<feature type="binding site" evidence="5">
    <location>
        <position position="133"/>
    </location>
    <ligand>
        <name>Ca(2+)</name>
        <dbReference type="ChEBI" id="CHEBI:29108"/>
        <label>1</label>
    </ligand>
</feature>
<feature type="binding site" evidence="5">
    <location>
        <position position="167"/>
    </location>
    <ligand>
        <name>Ca(2+)</name>
        <dbReference type="ChEBI" id="CHEBI:29108"/>
        <label>2</label>
    </ligand>
</feature>
<feature type="binding site" evidence="5">
    <location>
        <position position="169"/>
    </location>
    <ligand>
        <name>Ca(2+)</name>
        <dbReference type="ChEBI" id="CHEBI:29108"/>
        <label>2</label>
    </ligand>
</feature>
<feature type="binding site" evidence="5">
    <location>
        <position position="171"/>
    </location>
    <ligand>
        <name>Ca(2+)</name>
        <dbReference type="ChEBI" id="CHEBI:29108"/>
        <label>2</label>
    </ligand>
</feature>
<feature type="binding site" evidence="5">
    <location>
        <position position="173"/>
    </location>
    <ligand>
        <name>Ca(2+)</name>
        <dbReference type="ChEBI" id="CHEBI:29108"/>
        <label>2</label>
    </ligand>
</feature>
<feature type="binding site" evidence="5">
    <location>
        <position position="178"/>
    </location>
    <ligand>
        <name>Ca(2+)</name>
        <dbReference type="ChEBI" id="CHEBI:29108"/>
        <label>2</label>
    </ligand>
</feature>
<feature type="modified residue" description="N6-acetyllysine" evidence="2">
    <location>
        <position position="483"/>
    </location>
</feature>
<sequence>MAKERGLISPSDFAQLQKYMEYSTKKVSDVLKLFEDGEMAEYLQGDAIGYEGFQQFLKIYLEVDNVPDHLSQALFQSFQTGYYIEDTVREDVVCLSDVSCYFSLLEGGRPEDKLEFTFKLYDTDRNGILDSSEVDRIIIQMMRMAEYLDWDVSELRPILQEMMKEIDYDGSGSVSLAEWLRAGATTVPLLVLLGLEMTLKDNGQHMWRPKRFPRPVYCNLCESSIGLGKQGLSCNLCKYIVHDQCAMKALPCEVSTYAKSRKDIGVQSHVWVRGGCESGRCDRCQKKIRIYHSLVGLHCVWCHLEIHDDCLPAMGHECDCGLLRDHILPPSSIYPSVLASGQERKTSKISQKTMDDLSLSTSEALRIDPVSNTHPLLVFVNPKSGGKQGERVLWKFQYLLNPRQVFNLLKDGPEPGLRFFRDVPDYRILVCGGDGTVGWILESIDKANLPFVPPVAVLPLGTGNDLARCLRWGGGYEGQNLGKILKDLETSKVVHMDRWSVEVIPQQTEEKSDPVPFQIINNYFSIGVDASIAHRFHIMREKYPEKFNSRMKNKLWYFEFATSESIFSTCKKLEESLTVEICGKPLDLSNLSLEGIAVLNIPSTHGGSNLWGDTKRPHGDIHGINQALGATAKVITDPDILKTCVPDLSDKRLEVVGLEGAIEIGQIYTKLKNAGHRLAKCSEITFHTTKTLPMQIDGEPWMQTPCTIKITHRNQMPMLVGPPPRSSNFFGFLC</sequence>
<evidence type="ECO:0000250" key="1">
    <source>
        <dbReference type="UniProtKB" id="P20192"/>
    </source>
</evidence>
<evidence type="ECO:0000250" key="2">
    <source>
        <dbReference type="UniProtKB" id="P23743"/>
    </source>
</evidence>
<evidence type="ECO:0000250" key="3">
    <source>
        <dbReference type="UniProtKB" id="P51556"/>
    </source>
</evidence>
<evidence type="ECO:0000255" key="4">
    <source>
        <dbReference type="PROSITE-ProRule" id="PRU00226"/>
    </source>
</evidence>
<evidence type="ECO:0000255" key="5">
    <source>
        <dbReference type="PROSITE-ProRule" id="PRU00448"/>
    </source>
</evidence>
<evidence type="ECO:0000255" key="6">
    <source>
        <dbReference type="PROSITE-ProRule" id="PRU00783"/>
    </source>
</evidence>
<evidence type="ECO:0000305" key="7"/>
<comment type="function">
    <text evidence="2">Diacylglycerol kinase that converts diacylglycerol/DAG into phosphatidic acid/phosphatidate/PA and regulates the respective levels of these two bioactive lipids. Thereby, acts as a central switch between the signaling pathways activated by these second messengers with different cellular targets and opposite effects in numerous biological processes. Also plays an important role in the biosynthesis of complex lipids. Can also phosphorylate 1-alkyl-2-acylglycerol in vitro as efficiently as diacylglycerol provided it contains an arachidonoyl group. Also involved in the production of alkyl-lysophosphatidic acid, another bioactive lipid, through the phosphorylation of 1-alkyl-2-acetyl glycerol.</text>
</comment>
<comment type="catalytic activity">
    <reaction evidence="2">
        <text>a 1,2-diacyl-sn-glycerol + ATP = a 1,2-diacyl-sn-glycero-3-phosphate + ADP + H(+)</text>
        <dbReference type="Rhea" id="RHEA:10272"/>
        <dbReference type="ChEBI" id="CHEBI:15378"/>
        <dbReference type="ChEBI" id="CHEBI:17815"/>
        <dbReference type="ChEBI" id="CHEBI:30616"/>
        <dbReference type="ChEBI" id="CHEBI:58608"/>
        <dbReference type="ChEBI" id="CHEBI:456216"/>
        <dbReference type="EC" id="2.7.1.107"/>
    </reaction>
    <physiologicalReaction direction="left-to-right" evidence="2">
        <dbReference type="Rhea" id="RHEA:10273"/>
    </physiologicalReaction>
</comment>
<comment type="catalytic activity">
    <reaction evidence="3">
        <text>a 1-O-alkyl-sn-glycerol + ATP = a 1-O-alkyl-sn-glycero-3-phosphate + ADP + H(+)</text>
        <dbReference type="Rhea" id="RHEA:16937"/>
        <dbReference type="ChEBI" id="CHEBI:15378"/>
        <dbReference type="ChEBI" id="CHEBI:15850"/>
        <dbReference type="ChEBI" id="CHEBI:30616"/>
        <dbReference type="ChEBI" id="CHEBI:58014"/>
        <dbReference type="ChEBI" id="CHEBI:456216"/>
        <dbReference type="EC" id="2.7.1.93"/>
    </reaction>
    <physiologicalReaction direction="left-to-right" evidence="3">
        <dbReference type="Rhea" id="RHEA:16938"/>
    </physiologicalReaction>
</comment>
<comment type="catalytic activity">
    <reaction evidence="2">
        <text>1-O-alkyl-2-acyl-sn-glycerol + ATP = 1-O-alkyl-2-acyl-sn-glycero-3-phosphate + ADP + H(+)</text>
        <dbReference type="Rhea" id="RHEA:44072"/>
        <dbReference type="ChEBI" id="CHEBI:15378"/>
        <dbReference type="ChEBI" id="CHEBI:30616"/>
        <dbReference type="ChEBI" id="CHEBI:52595"/>
        <dbReference type="ChEBI" id="CHEBI:73332"/>
        <dbReference type="ChEBI" id="CHEBI:456216"/>
    </reaction>
    <physiologicalReaction direction="left-to-right" evidence="2">
        <dbReference type="Rhea" id="RHEA:44073"/>
    </physiologicalReaction>
</comment>
<comment type="catalytic activity">
    <reaction evidence="2">
        <text>1,2-dihexadecanoyl-sn-glycerol + ATP = 1,2-dihexadecanoyl-sn-glycero-3-phosphate + ADP + H(+)</text>
        <dbReference type="Rhea" id="RHEA:63324"/>
        <dbReference type="ChEBI" id="CHEBI:15378"/>
        <dbReference type="ChEBI" id="CHEBI:30616"/>
        <dbReference type="ChEBI" id="CHEBI:72859"/>
        <dbReference type="ChEBI" id="CHEBI:82929"/>
        <dbReference type="ChEBI" id="CHEBI:456216"/>
    </reaction>
    <physiologicalReaction direction="left-to-right" evidence="2">
        <dbReference type="Rhea" id="RHEA:63325"/>
    </physiologicalReaction>
</comment>
<comment type="catalytic activity">
    <reaction evidence="2">
        <text>1-hexadecanoyl-2-(9Z-octadecenoyl)-sn-glycerol + ATP = 1-hexadecanoyl-2-(9Z-octadecenoyl)-sn-glycero-3-phosphate + ADP + H(+)</text>
        <dbReference type="Rhea" id="RHEA:43416"/>
        <dbReference type="ChEBI" id="CHEBI:15378"/>
        <dbReference type="ChEBI" id="CHEBI:30616"/>
        <dbReference type="ChEBI" id="CHEBI:64839"/>
        <dbReference type="ChEBI" id="CHEBI:75466"/>
        <dbReference type="ChEBI" id="CHEBI:456216"/>
    </reaction>
    <physiologicalReaction direction="left-to-right" evidence="2">
        <dbReference type="Rhea" id="RHEA:43417"/>
    </physiologicalReaction>
</comment>
<comment type="catalytic activity">
    <reaction evidence="2">
        <text>2-(9Z-octadecenoyl)-glycerol + ATP = 2-(9Z-octadecenoyl)-sn-glycero-3-phosphate + ADP + H(+)</text>
        <dbReference type="Rhea" id="RHEA:63328"/>
        <dbReference type="ChEBI" id="CHEBI:15378"/>
        <dbReference type="ChEBI" id="CHEBI:30616"/>
        <dbReference type="ChEBI" id="CHEBI:73990"/>
        <dbReference type="ChEBI" id="CHEBI:77593"/>
        <dbReference type="ChEBI" id="CHEBI:456216"/>
    </reaction>
    <physiologicalReaction direction="left-to-right" evidence="2">
        <dbReference type="Rhea" id="RHEA:63329"/>
    </physiologicalReaction>
</comment>
<comment type="catalytic activity">
    <reaction evidence="2">
        <text>1,2-di-(9Z-octadecenoyl)-sn-glycerol + ATP = 1,2-di-(9Z-octadecenoyl)-sn-glycero-3-phosphate + ADP + H(+)</text>
        <dbReference type="Rhea" id="RHEA:40327"/>
        <dbReference type="ChEBI" id="CHEBI:15378"/>
        <dbReference type="ChEBI" id="CHEBI:30616"/>
        <dbReference type="ChEBI" id="CHEBI:52333"/>
        <dbReference type="ChEBI" id="CHEBI:74546"/>
        <dbReference type="ChEBI" id="CHEBI:456216"/>
    </reaction>
    <physiologicalReaction direction="left-to-right" evidence="2">
        <dbReference type="Rhea" id="RHEA:40328"/>
    </physiologicalReaction>
</comment>
<comment type="catalytic activity">
    <reaction evidence="2">
        <text>1-octadecanoyl-2-(5Z,8Z,11Z,14Z-eicosatetraenoyl)-sn-glycerol + ATP = 1-octadecanoyl-2-(5Z,8Z,11Z,14Z-eicosatetraenoyl)-sn-glycero-3-phosphate + ADP + H(+)</text>
        <dbReference type="Rhea" id="RHEA:40323"/>
        <dbReference type="ChEBI" id="CHEBI:15378"/>
        <dbReference type="ChEBI" id="CHEBI:30616"/>
        <dbReference type="ChEBI" id="CHEBI:75728"/>
        <dbReference type="ChEBI" id="CHEBI:77091"/>
        <dbReference type="ChEBI" id="CHEBI:456216"/>
    </reaction>
    <physiologicalReaction direction="left-to-right" evidence="2">
        <dbReference type="Rhea" id="RHEA:40324"/>
    </physiologicalReaction>
</comment>
<comment type="catalytic activity">
    <reaction evidence="1">
        <text>1,2-didecanoyl-sn-glycerol + ATP = 1,2-didecanoyl-sn-glycero-3-phosphate + ADP + H(+)</text>
        <dbReference type="Rhea" id="RHEA:43428"/>
        <dbReference type="ChEBI" id="CHEBI:15378"/>
        <dbReference type="ChEBI" id="CHEBI:18155"/>
        <dbReference type="ChEBI" id="CHEBI:30616"/>
        <dbReference type="ChEBI" id="CHEBI:78227"/>
        <dbReference type="ChEBI" id="CHEBI:456216"/>
    </reaction>
    <physiologicalReaction direction="left-to-right" evidence="1">
        <dbReference type="Rhea" id="RHEA:43429"/>
    </physiologicalReaction>
</comment>
<comment type="catalytic activity">
    <reaction evidence="3">
        <text>1-O-hexadecyl-2-acetyl-sn-glycerol + ATP = 1-O-hexadecyl-2-acetyl-sn-glycero-3-phosphate + ADP + H(+)</text>
        <dbReference type="Rhea" id="RHEA:41676"/>
        <dbReference type="ChEBI" id="CHEBI:15378"/>
        <dbReference type="ChEBI" id="CHEBI:30616"/>
        <dbReference type="ChEBI" id="CHEBI:75936"/>
        <dbReference type="ChEBI" id="CHEBI:78385"/>
        <dbReference type="ChEBI" id="CHEBI:456216"/>
    </reaction>
    <physiologicalReaction direction="left-to-right" evidence="3">
        <dbReference type="Rhea" id="RHEA:41677"/>
    </physiologicalReaction>
</comment>
<comment type="catalytic activity">
    <reaction evidence="2">
        <text>1-O-hexadecyl-2-(5Z,8Z,11Z,14Z-eicosatetraenoyl)-sn-glycerol + ATP = 1-O-hexadecyl-2-(5Z,8Z,11Z,14Z-eicosatetraenoyl)-sn-glycero-3-phosphate + ADP + H(+)</text>
        <dbReference type="Rhea" id="RHEA:40403"/>
        <dbReference type="ChEBI" id="CHEBI:15378"/>
        <dbReference type="ChEBI" id="CHEBI:30616"/>
        <dbReference type="ChEBI" id="CHEBI:77184"/>
        <dbReference type="ChEBI" id="CHEBI:77186"/>
        <dbReference type="ChEBI" id="CHEBI:456216"/>
    </reaction>
    <physiologicalReaction direction="left-to-right" evidence="2">
        <dbReference type="Rhea" id="RHEA:40404"/>
    </physiologicalReaction>
</comment>
<comment type="catalytic activity">
    <reaction evidence="2">
        <text>1-O-hexadecyl-2-(9Z-octadecenoyl)-sn-glycerol + ATP = 1-O-hexadecyl-2-(9Z-octadecenoyl)-sn-glycero-3-phosphate + ADP + H(+)</text>
        <dbReference type="Rhea" id="RHEA:40407"/>
        <dbReference type="ChEBI" id="CHEBI:15378"/>
        <dbReference type="ChEBI" id="CHEBI:30616"/>
        <dbReference type="ChEBI" id="CHEBI:77185"/>
        <dbReference type="ChEBI" id="CHEBI:77187"/>
        <dbReference type="ChEBI" id="CHEBI:456216"/>
    </reaction>
    <physiologicalReaction direction="left-to-right" evidence="2">
        <dbReference type="Rhea" id="RHEA:40408"/>
    </physiologicalReaction>
</comment>
<comment type="catalytic activity">
    <reaction evidence="3">
        <text>1-O-hexadecyl-sn-glycerol + ATP = 1-O-hexadecyl-sn-glycero-3-phosphate + ADP + H(+)</text>
        <dbReference type="Rhea" id="RHEA:41672"/>
        <dbReference type="ChEBI" id="CHEBI:15378"/>
        <dbReference type="ChEBI" id="CHEBI:30616"/>
        <dbReference type="ChEBI" id="CHEBI:34115"/>
        <dbReference type="ChEBI" id="CHEBI:77580"/>
        <dbReference type="ChEBI" id="CHEBI:456216"/>
    </reaction>
    <physiologicalReaction direction="left-to-right" evidence="3">
        <dbReference type="Rhea" id="RHEA:41673"/>
    </physiologicalReaction>
</comment>
<comment type="activity regulation">
    <text evidence="2">Stimulated by calcium and phosphatidylserine.</text>
</comment>
<comment type="pathway">
    <text evidence="2">Lipid metabolism; glycerolipid metabolism.</text>
</comment>
<comment type="subunit">
    <text evidence="2">Monomer.</text>
</comment>
<comment type="subcellular location">
    <subcellularLocation>
        <location evidence="2">Cytoplasm</location>
        <location evidence="2">Cytosol</location>
    </subcellularLocation>
</comment>
<comment type="similarity">
    <text evidence="7">Belongs to the eukaryotic diacylglycerol kinase family.</text>
</comment>
<name>DGKA_BOVIN</name>